<keyword id="KW-0972">Capsule biogenesis/degradation</keyword>
<keyword id="KW-1003">Cell membrane</keyword>
<keyword id="KW-0270">Exopolysaccharide synthesis</keyword>
<keyword id="KW-0472">Membrane</keyword>
<keyword id="KW-0812">Transmembrane</keyword>
<keyword id="KW-1133">Transmembrane helix</keyword>
<dbReference type="EMBL" id="CP000046">
    <property type="protein sequence ID" value="AAW38684.1"/>
    <property type="molecule type" value="Genomic_DNA"/>
</dbReference>
<dbReference type="RefSeq" id="WP_000659675.1">
    <property type="nucleotide sequence ID" value="NZ_JBGOFO010000001.1"/>
</dbReference>
<dbReference type="SMR" id="Q5HCN3"/>
<dbReference type="KEGG" id="sac:SACOL2687"/>
<dbReference type="HOGENOM" id="CLU_082668_1_1_9"/>
<dbReference type="UniPathway" id="UPA00934"/>
<dbReference type="Proteomes" id="UP000000530">
    <property type="component" value="Chromosome"/>
</dbReference>
<dbReference type="GO" id="GO:0005886">
    <property type="term" value="C:plasma membrane"/>
    <property type="evidence" value="ECO:0007669"/>
    <property type="project" value="UniProtKB-SubCell"/>
</dbReference>
<dbReference type="GO" id="GO:0004713">
    <property type="term" value="F:protein tyrosine kinase activity"/>
    <property type="evidence" value="ECO:0007669"/>
    <property type="project" value="TreeGrafter"/>
</dbReference>
<dbReference type="GO" id="GO:0045227">
    <property type="term" value="P:capsule polysaccharide biosynthetic process"/>
    <property type="evidence" value="ECO:0007669"/>
    <property type="project" value="UniProtKB-UniPathway"/>
</dbReference>
<dbReference type="InterPro" id="IPR050445">
    <property type="entry name" value="Bact_polysacc_biosynth/exp"/>
</dbReference>
<dbReference type="InterPro" id="IPR003856">
    <property type="entry name" value="LPS_length_determ_N_term"/>
</dbReference>
<dbReference type="PANTHER" id="PTHR32309:SF13">
    <property type="entry name" value="FERRIC ENTEROBACTIN TRANSPORT PROTEIN FEPE"/>
    <property type="match status" value="1"/>
</dbReference>
<dbReference type="PANTHER" id="PTHR32309">
    <property type="entry name" value="TYROSINE-PROTEIN KINASE"/>
    <property type="match status" value="1"/>
</dbReference>
<dbReference type="Pfam" id="PF02706">
    <property type="entry name" value="Wzz"/>
    <property type="match status" value="1"/>
</dbReference>
<evidence type="ECO:0000250" key="1"/>
<evidence type="ECO:0000255" key="2"/>
<evidence type="ECO:0000305" key="3"/>
<organism>
    <name type="scientific">Staphylococcus aureus (strain COL)</name>
    <dbReference type="NCBI Taxonomy" id="93062"/>
    <lineage>
        <taxon>Bacteria</taxon>
        <taxon>Bacillati</taxon>
        <taxon>Bacillota</taxon>
        <taxon>Bacilli</taxon>
        <taxon>Bacillales</taxon>
        <taxon>Staphylococcaceae</taxon>
        <taxon>Staphylococcus</taxon>
    </lineage>
</organism>
<accession>Q5HCN3</accession>
<sequence>MKEKFDLVKLLNILKKNIKLLLILPAICLVVSAALTFFVMPDKYTASTQILVNMKKSSSDLAFQNVQSSLQSVNTYTEIIKSPRILDKVSREFDGQYSTAELNSFLKVTNQTNSQIITVSVTTGNKSESDKIVNKISKVFAHDMPKIMSVDNVTILSSAHDNAVKVSPIVSVNLVISIIVGIVLAILIIFLKELLDKRIKTEEDVESQLGLPILGSIQKF</sequence>
<protein>
    <recommendedName>
        <fullName>Capsular polysaccharide biosynthesis protein CapA</fullName>
    </recommendedName>
</protein>
<name>CAPA_STAAC</name>
<feature type="chain" id="PRO_0000217217" description="Capsular polysaccharide biosynthesis protein CapA">
    <location>
        <begin position="1"/>
        <end position="220"/>
    </location>
</feature>
<feature type="transmembrane region" description="Helical" evidence="2">
    <location>
        <begin position="20"/>
        <end position="40"/>
    </location>
</feature>
<feature type="transmembrane region" description="Helical" evidence="2">
    <location>
        <begin position="171"/>
        <end position="191"/>
    </location>
</feature>
<gene>
    <name type="primary">capA</name>
    <name type="synonym">cap1A</name>
    <name type="ordered locus">SACOL2687</name>
</gene>
<reference key="1">
    <citation type="journal article" date="2005" name="J. Bacteriol.">
        <title>Insights on evolution of virulence and resistance from the complete genome analysis of an early methicillin-resistant Staphylococcus aureus strain and a biofilm-producing methicillin-resistant Staphylococcus epidermidis strain.</title>
        <authorList>
            <person name="Gill S.R."/>
            <person name="Fouts D.E."/>
            <person name="Archer G.L."/>
            <person name="Mongodin E.F."/>
            <person name="DeBoy R.T."/>
            <person name="Ravel J."/>
            <person name="Paulsen I.T."/>
            <person name="Kolonay J.F."/>
            <person name="Brinkac L.M."/>
            <person name="Beanan M.J."/>
            <person name="Dodson R.J."/>
            <person name="Daugherty S.C."/>
            <person name="Madupu R."/>
            <person name="Angiuoli S.V."/>
            <person name="Durkin A.S."/>
            <person name="Haft D.H."/>
            <person name="Vamathevan J.J."/>
            <person name="Khouri H."/>
            <person name="Utterback T.R."/>
            <person name="Lee C."/>
            <person name="Dimitrov G."/>
            <person name="Jiang L."/>
            <person name="Qin H."/>
            <person name="Weidman J."/>
            <person name="Tran K."/>
            <person name="Kang K.H."/>
            <person name="Hance I.R."/>
            <person name="Nelson K.E."/>
            <person name="Fraser C.M."/>
        </authorList>
    </citation>
    <scope>NUCLEOTIDE SEQUENCE [LARGE SCALE GENOMIC DNA]</scope>
    <source>
        <strain>COL</strain>
    </source>
</reference>
<comment type="function">
    <text evidence="1">Required for the biosynthesis of type 1 capsular polysaccharide.</text>
</comment>
<comment type="pathway">
    <text>Capsule biogenesis; capsule polysaccharide biosynthesis.</text>
</comment>
<comment type="subcellular location">
    <subcellularLocation>
        <location evidence="3">Cell membrane</location>
        <topology evidence="3">Multi-pass membrane protein</topology>
    </subcellularLocation>
</comment>
<comment type="similarity">
    <text evidence="3">Belongs to the CpsC/CapA family.</text>
</comment>
<proteinExistence type="inferred from homology"/>